<protein>
    <recommendedName>
        <fullName evidence="1">Aspartyl/glutamyl-tRNA(Asn/Gln) amidotransferase subunit B</fullName>
        <shortName evidence="1">Asp/Glu-ADT subunit B</shortName>
        <ecNumber evidence="1">6.3.5.-</ecNumber>
    </recommendedName>
</protein>
<evidence type="ECO:0000255" key="1">
    <source>
        <dbReference type="HAMAP-Rule" id="MF_00121"/>
    </source>
</evidence>
<comment type="function">
    <text evidence="1">Allows the formation of correctly charged Asn-tRNA(Asn) or Gln-tRNA(Gln) through the transamidation of misacylated Asp-tRNA(Asn) or Glu-tRNA(Gln) in organisms which lack either or both of asparaginyl-tRNA or glutaminyl-tRNA synthetases. The reaction takes place in the presence of glutamine and ATP through an activated phospho-Asp-tRNA(Asn) or phospho-Glu-tRNA(Gln).</text>
</comment>
<comment type="catalytic activity">
    <reaction evidence="1">
        <text>L-glutamyl-tRNA(Gln) + L-glutamine + ATP + H2O = L-glutaminyl-tRNA(Gln) + L-glutamate + ADP + phosphate + H(+)</text>
        <dbReference type="Rhea" id="RHEA:17521"/>
        <dbReference type="Rhea" id="RHEA-COMP:9681"/>
        <dbReference type="Rhea" id="RHEA-COMP:9684"/>
        <dbReference type="ChEBI" id="CHEBI:15377"/>
        <dbReference type="ChEBI" id="CHEBI:15378"/>
        <dbReference type="ChEBI" id="CHEBI:29985"/>
        <dbReference type="ChEBI" id="CHEBI:30616"/>
        <dbReference type="ChEBI" id="CHEBI:43474"/>
        <dbReference type="ChEBI" id="CHEBI:58359"/>
        <dbReference type="ChEBI" id="CHEBI:78520"/>
        <dbReference type="ChEBI" id="CHEBI:78521"/>
        <dbReference type="ChEBI" id="CHEBI:456216"/>
    </reaction>
</comment>
<comment type="catalytic activity">
    <reaction evidence="1">
        <text>L-aspartyl-tRNA(Asn) + L-glutamine + ATP + H2O = L-asparaginyl-tRNA(Asn) + L-glutamate + ADP + phosphate + 2 H(+)</text>
        <dbReference type="Rhea" id="RHEA:14513"/>
        <dbReference type="Rhea" id="RHEA-COMP:9674"/>
        <dbReference type="Rhea" id="RHEA-COMP:9677"/>
        <dbReference type="ChEBI" id="CHEBI:15377"/>
        <dbReference type="ChEBI" id="CHEBI:15378"/>
        <dbReference type="ChEBI" id="CHEBI:29985"/>
        <dbReference type="ChEBI" id="CHEBI:30616"/>
        <dbReference type="ChEBI" id="CHEBI:43474"/>
        <dbReference type="ChEBI" id="CHEBI:58359"/>
        <dbReference type="ChEBI" id="CHEBI:78515"/>
        <dbReference type="ChEBI" id="CHEBI:78516"/>
        <dbReference type="ChEBI" id="CHEBI:456216"/>
    </reaction>
</comment>
<comment type="subunit">
    <text evidence="1">Heterotrimer of A, B and C subunits.</text>
</comment>
<comment type="similarity">
    <text evidence="1">Belongs to the GatB/GatE family. GatB subfamily.</text>
</comment>
<accession>Q0BAV5</accession>
<dbReference type="EC" id="6.3.5.-" evidence="1"/>
<dbReference type="EMBL" id="CP000440">
    <property type="protein sequence ID" value="ABI88718.1"/>
    <property type="molecule type" value="Genomic_DNA"/>
</dbReference>
<dbReference type="RefSeq" id="WP_011658221.1">
    <property type="nucleotide sequence ID" value="NC_008390.1"/>
</dbReference>
<dbReference type="SMR" id="Q0BAV5"/>
<dbReference type="GeneID" id="93084646"/>
<dbReference type="KEGG" id="bam:Bamb_3162"/>
<dbReference type="PATRIC" id="fig|339670.21.peg.1697"/>
<dbReference type="eggNOG" id="COG0064">
    <property type="taxonomic scope" value="Bacteria"/>
</dbReference>
<dbReference type="Proteomes" id="UP000000662">
    <property type="component" value="Chromosome 1"/>
</dbReference>
<dbReference type="GO" id="GO:0050566">
    <property type="term" value="F:asparaginyl-tRNA synthase (glutamine-hydrolyzing) activity"/>
    <property type="evidence" value="ECO:0007669"/>
    <property type="project" value="RHEA"/>
</dbReference>
<dbReference type="GO" id="GO:0005524">
    <property type="term" value="F:ATP binding"/>
    <property type="evidence" value="ECO:0007669"/>
    <property type="project" value="UniProtKB-KW"/>
</dbReference>
<dbReference type="GO" id="GO:0050567">
    <property type="term" value="F:glutaminyl-tRNA synthase (glutamine-hydrolyzing) activity"/>
    <property type="evidence" value="ECO:0007669"/>
    <property type="project" value="UniProtKB-UniRule"/>
</dbReference>
<dbReference type="GO" id="GO:0070681">
    <property type="term" value="P:glutaminyl-tRNAGln biosynthesis via transamidation"/>
    <property type="evidence" value="ECO:0007669"/>
    <property type="project" value="TreeGrafter"/>
</dbReference>
<dbReference type="GO" id="GO:0006412">
    <property type="term" value="P:translation"/>
    <property type="evidence" value="ECO:0007669"/>
    <property type="project" value="UniProtKB-UniRule"/>
</dbReference>
<dbReference type="FunFam" id="1.10.10.410:FF:000001">
    <property type="entry name" value="Aspartyl/glutamyl-tRNA(Asn/Gln) amidotransferase subunit B"/>
    <property type="match status" value="1"/>
</dbReference>
<dbReference type="FunFam" id="1.10.150.380:FF:000001">
    <property type="entry name" value="Aspartyl/glutamyl-tRNA(Asn/Gln) amidotransferase subunit B"/>
    <property type="match status" value="1"/>
</dbReference>
<dbReference type="Gene3D" id="1.10.10.410">
    <property type="match status" value="1"/>
</dbReference>
<dbReference type="Gene3D" id="1.10.150.380">
    <property type="entry name" value="GatB domain, N-terminal subdomain"/>
    <property type="match status" value="1"/>
</dbReference>
<dbReference type="HAMAP" id="MF_00121">
    <property type="entry name" value="GatB"/>
    <property type="match status" value="1"/>
</dbReference>
<dbReference type="InterPro" id="IPR017959">
    <property type="entry name" value="Asn/Gln-tRNA_amidoTrfase_suB/E"/>
</dbReference>
<dbReference type="InterPro" id="IPR006075">
    <property type="entry name" value="Asn/Gln-tRNA_Trfase_suB/E_cat"/>
</dbReference>
<dbReference type="InterPro" id="IPR018027">
    <property type="entry name" value="Asn/Gln_amidotransferase"/>
</dbReference>
<dbReference type="InterPro" id="IPR003789">
    <property type="entry name" value="Asn/Gln_tRNA_amidoTrase-B-like"/>
</dbReference>
<dbReference type="InterPro" id="IPR004413">
    <property type="entry name" value="GatB"/>
</dbReference>
<dbReference type="InterPro" id="IPR042114">
    <property type="entry name" value="GatB_C_1"/>
</dbReference>
<dbReference type="InterPro" id="IPR023168">
    <property type="entry name" value="GatB_Yqey_C_2"/>
</dbReference>
<dbReference type="InterPro" id="IPR017958">
    <property type="entry name" value="Gln-tRNA_amidoTrfase_suB_CS"/>
</dbReference>
<dbReference type="InterPro" id="IPR014746">
    <property type="entry name" value="Gln_synth/guanido_kin_cat_dom"/>
</dbReference>
<dbReference type="NCBIfam" id="TIGR00133">
    <property type="entry name" value="gatB"/>
    <property type="match status" value="1"/>
</dbReference>
<dbReference type="NCBIfam" id="NF004012">
    <property type="entry name" value="PRK05477.1-2"/>
    <property type="match status" value="1"/>
</dbReference>
<dbReference type="NCBIfam" id="NF004014">
    <property type="entry name" value="PRK05477.1-4"/>
    <property type="match status" value="1"/>
</dbReference>
<dbReference type="NCBIfam" id="NF004015">
    <property type="entry name" value="PRK05477.1-5"/>
    <property type="match status" value="1"/>
</dbReference>
<dbReference type="PANTHER" id="PTHR11659">
    <property type="entry name" value="GLUTAMYL-TRNA GLN AMIDOTRANSFERASE SUBUNIT B MITOCHONDRIAL AND PROKARYOTIC PET112-RELATED"/>
    <property type="match status" value="1"/>
</dbReference>
<dbReference type="PANTHER" id="PTHR11659:SF0">
    <property type="entry name" value="GLUTAMYL-TRNA(GLN) AMIDOTRANSFERASE SUBUNIT B, MITOCHONDRIAL"/>
    <property type="match status" value="1"/>
</dbReference>
<dbReference type="Pfam" id="PF02934">
    <property type="entry name" value="GatB_N"/>
    <property type="match status" value="1"/>
</dbReference>
<dbReference type="Pfam" id="PF02637">
    <property type="entry name" value="GatB_Yqey"/>
    <property type="match status" value="1"/>
</dbReference>
<dbReference type="SMART" id="SM00845">
    <property type="entry name" value="GatB_Yqey"/>
    <property type="match status" value="1"/>
</dbReference>
<dbReference type="SUPFAM" id="SSF89095">
    <property type="entry name" value="GatB/YqeY motif"/>
    <property type="match status" value="1"/>
</dbReference>
<dbReference type="SUPFAM" id="SSF55931">
    <property type="entry name" value="Glutamine synthetase/guanido kinase"/>
    <property type="match status" value="1"/>
</dbReference>
<dbReference type="PROSITE" id="PS01234">
    <property type="entry name" value="GATB"/>
    <property type="match status" value="1"/>
</dbReference>
<sequence length="491" mass="53465">MATQWEVVIGLETHAQLSTVSKIFSGAPTQFGAEPNTQACPVDLALPGVLPVLNRGAVERAIRFGLAIGSTIAPRSIFARKNYFYPDLPKGYQISQYEIPVVQGGQITIQVPANEKAGKPAYEKTVNLTRAHLEEDAGKSLHEDFAGMTGIDLNRAGTPLLEIVTEPEMRSAAEAVAYAKSLHALVVWLGICDGNMQEGSFRCDANVSVRPVGQEKFGTRAEIKNLNSFRFLEEAINYEVRRQIELIEDGGEVVQETRLYDPDKRETRSMRSKEDAHDYRYFPDPDLMPLVIGQDWIERVQAGMPELPAAIQQRFVEQYGVSAYDAGVLTSSKAMAAYFEAVVAKAGAANAKIAANWLMGDVSSQLNRDGIEIDAIPVSAAQLALVLQRIADGTISNKIAKEIFSAIWDEKATDEAAADRIIDAKGLKQISDTGALEAIIDEVLAANAKSVEEFRAGKEKAFNALIGQAMKATKGKANPQQVNELLKKKLG</sequence>
<feature type="chain" id="PRO_1000015942" description="Aspartyl/glutamyl-tRNA(Asn/Gln) amidotransferase subunit B">
    <location>
        <begin position="1"/>
        <end position="491"/>
    </location>
</feature>
<reference key="1">
    <citation type="submission" date="2006-08" db="EMBL/GenBank/DDBJ databases">
        <title>Complete sequence of chromosome 1 of Burkholderia cepacia AMMD.</title>
        <authorList>
            <person name="Copeland A."/>
            <person name="Lucas S."/>
            <person name="Lapidus A."/>
            <person name="Barry K."/>
            <person name="Detter J.C."/>
            <person name="Glavina del Rio T."/>
            <person name="Hammon N."/>
            <person name="Israni S."/>
            <person name="Pitluck S."/>
            <person name="Bruce D."/>
            <person name="Chain P."/>
            <person name="Malfatti S."/>
            <person name="Shin M."/>
            <person name="Vergez L."/>
            <person name="Schmutz J."/>
            <person name="Larimer F."/>
            <person name="Land M."/>
            <person name="Hauser L."/>
            <person name="Kyrpides N."/>
            <person name="Kim E."/>
            <person name="Parke J."/>
            <person name="Coenye T."/>
            <person name="Konstantinidis K."/>
            <person name="Ramette A."/>
            <person name="Tiedje J."/>
            <person name="Richardson P."/>
        </authorList>
    </citation>
    <scope>NUCLEOTIDE SEQUENCE [LARGE SCALE GENOMIC DNA]</scope>
    <source>
        <strain>ATCC BAA-244 / DSM 16087 / CCUG 44356 / LMG 19182 / AMMD</strain>
    </source>
</reference>
<proteinExistence type="inferred from homology"/>
<gene>
    <name evidence="1" type="primary">gatB</name>
    <name type="ordered locus">Bamb_3162</name>
</gene>
<name>GATB_BURCM</name>
<keyword id="KW-0067">ATP-binding</keyword>
<keyword id="KW-0436">Ligase</keyword>
<keyword id="KW-0547">Nucleotide-binding</keyword>
<keyword id="KW-0648">Protein biosynthesis</keyword>
<organism>
    <name type="scientific">Burkholderia ambifaria (strain ATCC BAA-244 / DSM 16087 / CCUG 44356 / LMG 19182 / AMMD)</name>
    <name type="common">Burkholderia cepacia (strain AMMD)</name>
    <dbReference type="NCBI Taxonomy" id="339670"/>
    <lineage>
        <taxon>Bacteria</taxon>
        <taxon>Pseudomonadati</taxon>
        <taxon>Pseudomonadota</taxon>
        <taxon>Betaproteobacteria</taxon>
        <taxon>Burkholderiales</taxon>
        <taxon>Burkholderiaceae</taxon>
        <taxon>Burkholderia</taxon>
        <taxon>Burkholderia cepacia complex</taxon>
    </lineage>
</organism>